<accession>B3EP65</accession>
<feature type="chain" id="PRO_1000125914" description="Small ribosomal subunit protein uS7">
    <location>
        <begin position="1"/>
        <end position="155"/>
    </location>
</feature>
<gene>
    <name evidence="1" type="primary">rpsG</name>
    <name type="ordered locus">Cphamn1_2300</name>
</gene>
<reference key="1">
    <citation type="submission" date="2008-06" db="EMBL/GenBank/DDBJ databases">
        <title>Complete sequence of Chlorobium phaeobacteroides BS1.</title>
        <authorList>
            <consortium name="US DOE Joint Genome Institute"/>
            <person name="Lucas S."/>
            <person name="Copeland A."/>
            <person name="Lapidus A."/>
            <person name="Glavina del Rio T."/>
            <person name="Dalin E."/>
            <person name="Tice H."/>
            <person name="Bruce D."/>
            <person name="Goodwin L."/>
            <person name="Pitluck S."/>
            <person name="Schmutz J."/>
            <person name="Larimer F."/>
            <person name="Land M."/>
            <person name="Hauser L."/>
            <person name="Kyrpides N."/>
            <person name="Ovchinnikova G."/>
            <person name="Li T."/>
            <person name="Liu Z."/>
            <person name="Zhao F."/>
            <person name="Overmann J."/>
            <person name="Bryant D.A."/>
            <person name="Richardson P."/>
        </authorList>
    </citation>
    <scope>NUCLEOTIDE SEQUENCE [LARGE SCALE GENOMIC DNA]</scope>
    <source>
        <strain>BS1</strain>
    </source>
</reference>
<proteinExistence type="inferred from homology"/>
<organism>
    <name type="scientific">Chlorobium phaeobacteroides (strain BS1)</name>
    <dbReference type="NCBI Taxonomy" id="331678"/>
    <lineage>
        <taxon>Bacteria</taxon>
        <taxon>Pseudomonadati</taxon>
        <taxon>Chlorobiota</taxon>
        <taxon>Chlorobiia</taxon>
        <taxon>Chlorobiales</taxon>
        <taxon>Chlorobiaceae</taxon>
        <taxon>Chlorobium/Pelodictyon group</taxon>
        <taxon>Chlorobium</taxon>
    </lineage>
</organism>
<sequence>MAKKVVGGGVKPDLRFSDESVARLINAVMLDGKKDVAAKIVYGAMDIIAGKMKDEEPLEVFRRALSNVAPLVEVRSKRVGGATYQIPMEVKASRRDALAFRWIKLYATRRGGRSMSEKLAAELMDAASEQGASVKKRDEVHRMADANKAFAHFRF</sequence>
<evidence type="ECO:0000255" key="1">
    <source>
        <dbReference type="HAMAP-Rule" id="MF_00480"/>
    </source>
</evidence>
<evidence type="ECO:0000305" key="2"/>
<protein>
    <recommendedName>
        <fullName evidence="1">Small ribosomal subunit protein uS7</fullName>
    </recommendedName>
    <alternativeName>
        <fullName evidence="2">30S ribosomal protein S7</fullName>
    </alternativeName>
</protein>
<dbReference type="EMBL" id="CP001101">
    <property type="protein sequence ID" value="ACE05204.1"/>
    <property type="molecule type" value="Genomic_DNA"/>
</dbReference>
<dbReference type="SMR" id="B3EP65"/>
<dbReference type="STRING" id="331678.Cphamn1_2300"/>
<dbReference type="KEGG" id="cpb:Cphamn1_2300"/>
<dbReference type="eggNOG" id="COG0049">
    <property type="taxonomic scope" value="Bacteria"/>
</dbReference>
<dbReference type="HOGENOM" id="CLU_072226_1_1_10"/>
<dbReference type="OrthoDB" id="9807653at2"/>
<dbReference type="GO" id="GO:0015935">
    <property type="term" value="C:small ribosomal subunit"/>
    <property type="evidence" value="ECO:0007669"/>
    <property type="project" value="InterPro"/>
</dbReference>
<dbReference type="GO" id="GO:0019843">
    <property type="term" value="F:rRNA binding"/>
    <property type="evidence" value="ECO:0007669"/>
    <property type="project" value="UniProtKB-UniRule"/>
</dbReference>
<dbReference type="GO" id="GO:0003735">
    <property type="term" value="F:structural constituent of ribosome"/>
    <property type="evidence" value="ECO:0007669"/>
    <property type="project" value="InterPro"/>
</dbReference>
<dbReference type="GO" id="GO:0000049">
    <property type="term" value="F:tRNA binding"/>
    <property type="evidence" value="ECO:0007669"/>
    <property type="project" value="UniProtKB-UniRule"/>
</dbReference>
<dbReference type="GO" id="GO:0006412">
    <property type="term" value="P:translation"/>
    <property type="evidence" value="ECO:0007669"/>
    <property type="project" value="UniProtKB-UniRule"/>
</dbReference>
<dbReference type="CDD" id="cd14869">
    <property type="entry name" value="uS7_Bacteria"/>
    <property type="match status" value="1"/>
</dbReference>
<dbReference type="FunFam" id="1.10.455.10:FF:000001">
    <property type="entry name" value="30S ribosomal protein S7"/>
    <property type="match status" value="1"/>
</dbReference>
<dbReference type="Gene3D" id="1.10.455.10">
    <property type="entry name" value="Ribosomal protein S7 domain"/>
    <property type="match status" value="1"/>
</dbReference>
<dbReference type="HAMAP" id="MF_00480_B">
    <property type="entry name" value="Ribosomal_uS7_B"/>
    <property type="match status" value="1"/>
</dbReference>
<dbReference type="InterPro" id="IPR000235">
    <property type="entry name" value="Ribosomal_uS7"/>
</dbReference>
<dbReference type="InterPro" id="IPR005717">
    <property type="entry name" value="Ribosomal_uS7_bac/org-type"/>
</dbReference>
<dbReference type="InterPro" id="IPR023798">
    <property type="entry name" value="Ribosomal_uS7_dom"/>
</dbReference>
<dbReference type="InterPro" id="IPR036823">
    <property type="entry name" value="Ribosomal_uS7_dom_sf"/>
</dbReference>
<dbReference type="NCBIfam" id="TIGR01029">
    <property type="entry name" value="rpsG_bact"/>
    <property type="match status" value="1"/>
</dbReference>
<dbReference type="PANTHER" id="PTHR11205">
    <property type="entry name" value="RIBOSOMAL PROTEIN S7"/>
    <property type="match status" value="1"/>
</dbReference>
<dbReference type="Pfam" id="PF00177">
    <property type="entry name" value="Ribosomal_S7"/>
    <property type="match status" value="1"/>
</dbReference>
<dbReference type="PIRSF" id="PIRSF002122">
    <property type="entry name" value="RPS7p_RPS7a_RPS5e_RPS7o"/>
    <property type="match status" value="1"/>
</dbReference>
<dbReference type="SUPFAM" id="SSF47973">
    <property type="entry name" value="Ribosomal protein S7"/>
    <property type="match status" value="1"/>
</dbReference>
<keyword id="KW-0687">Ribonucleoprotein</keyword>
<keyword id="KW-0689">Ribosomal protein</keyword>
<keyword id="KW-0694">RNA-binding</keyword>
<keyword id="KW-0699">rRNA-binding</keyword>
<keyword id="KW-0820">tRNA-binding</keyword>
<comment type="function">
    <text evidence="1">One of the primary rRNA binding proteins, it binds directly to 16S rRNA where it nucleates assembly of the head domain of the 30S subunit. Is located at the subunit interface close to the decoding center, probably blocks exit of the E-site tRNA.</text>
</comment>
<comment type="subunit">
    <text evidence="1">Part of the 30S ribosomal subunit. Contacts proteins S9 and S11.</text>
</comment>
<comment type="similarity">
    <text evidence="1">Belongs to the universal ribosomal protein uS7 family.</text>
</comment>
<name>RS7_CHLPB</name>